<evidence type="ECO:0000255" key="1">
    <source>
        <dbReference type="HAMAP-Rule" id="MF_00504"/>
    </source>
</evidence>
<organism>
    <name type="scientific">Escherichia coli (strain K12 / DH10B)</name>
    <dbReference type="NCBI Taxonomy" id="316385"/>
    <lineage>
        <taxon>Bacteria</taxon>
        <taxon>Pseudomonadati</taxon>
        <taxon>Pseudomonadota</taxon>
        <taxon>Gammaproteobacteria</taxon>
        <taxon>Enterobacterales</taxon>
        <taxon>Enterobacteriaceae</taxon>
        <taxon>Escherichia</taxon>
    </lineage>
</organism>
<accession>B1XAZ8</accession>
<name>PEPB_ECODH</name>
<reference key="1">
    <citation type="journal article" date="2008" name="J. Bacteriol.">
        <title>The complete genome sequence of Escherichia coli DH10B: insights into the biology of a laboratory workhorse.</title>
        <authorList>
            <person name="Durfee T."/>
            <person name="Nelson R."/>
            <person name="Baldwin S."/>
            <person name="Plunkett G. III"/>
            <person name="Burland V."/>
            <person name="Mau B."/>
            <person name="Petrosino J.F."/>
            <person name="Qin X."/>
            <person name="Muzny D.M."/>
            <person name="Ayele M."/>
            <person name="Gibbs R.A."/>
            <person name="Csorgo B."/>
            <person name="Posfai G."/>
            <person name="Weinstock G.M."/>
            <person name="Blattner F.R."/>
        </authorList>
    </citation>
    <scope>NUCLEOTIDE SEQUENCE [LARGE SCALE GENOMIC DNA]</scope>
    <source>
        <strain>K12 / DH10B</strain>
    </source>
</reference>
<sequence length="427" mass="46180">MTEAMKITLSTQPADARWGEKATYSINNDGITLHLNGADDLGLIQRAARKIDGLGIKHVQLSGEGWDADRCWAFWQGYKAPKGTRKVVWPDLDDAQRQELDNRLMIIDWVRDTINAPAEELGPSQLAQRAVDLISNVAGDRVTYRITKGEDLREQGYMGLHTVGRGSERSPVLLALDYNPTGDKEAPVYACLVGKGITFDSGGYSIKQTAFMDSMKSDMGGAATVTGALAFAITRGLNKRVKLFLCCADNLISGNAFKLGDIITYRNGKKVEVMNTDAEGRLVLADGLIDASAQKPEMIIDAATLTGAAKTALGNDYHALFSFDDALAGRLLASAAQENEPFWRLPLAEFHRSQLPSNFAELNNTGSAAYPAGASTAAGFLSHFVENYQQGWLHIDCSATYRKAPVEQWSAGATGLGVRTIANLLTA</sequence>
<proteinExistence type="inferred from homology"/>
<gene>
    <name evidence="1" type="primary">pepB</name>
    <name type="ordered locus">ECDH10B_2690</name>
</gene>
<protein>
    <recommendedName>
        <fullName evidence="1">Peptidase B</fullName>
        <ecNumber evidence="1">3.4.11.23</ecNumber>
    </recommendedName>
    <alternativeName>
        <fullName evidence="1">Aminopeptidase B</fullName>
    </alternativeName>
</protein>
<keyword id="KW-0031">Aminopeptidase</keyword>
<keyword id="KW-0963">Cytoplasm</keyword>
<keyword id="KW-0378">Hydrolase</keyword>
<keyword id="KW-0464">Manganese</keyword>
<keyword id="KW-0479">Metal-binding</keyword>
<keyword id="KW-0645">Protease</keyword>
<dbReference type="EC" id="3.4.11.23" evidence="1"/>
<dbReference type="EMBL" id="CP000948">
    <property type="protein sequence ID" value="ACB03675.1"/>
    <property type="molecule type" value="Genomic_DNA"/>
</dbReference>
<dbReference type="RefSeq" id="WP_000133592.1">
    <property type="nucleotide sequence ID" value="NC_010473.1"/>
</dbReference>
<dbReference type="SMR" id="B1XAZ8"/>
<dbReference type="MEROPS" id="M17.004"/>
<dbReference type="KEGG" id="ecd:ECDH10B_2690"/>
<dbReference type="HOGENOM" id="CLU_013734_7_1_6"/>
<dbReference type="GO" id="GO:0005737">
    <property type="term" value="C:cytoplasm"/>
    <property type="evidence" value="ECO:0007669"/>
    <property type="project" value="UniProtKB-SubCell"/>
</dbReference>
<dbReference type="GO" id="GO:0030145">
    <property type="term" value="F:manganese ion binding"/>
    <property type="evidence" value="ECO:0007669"/>
    <property type="project" value="UniProtKB-UniRule"/>
</dbReference>
<dbReference type="GO" id="GO:0070006">
    <property type="term" value="F:metalloaminopeptidase activity"/>
    <property type="evidence" value="ECO:0007669"/>
    <property type="project" value="InterPro"/>
</dbReference>
<dbReference type="GO" id="GO:0006508">
    <property type="term" value="P:proteolysis"/>
    <property type="evidence" value="ECO:0007669"/>
    <property type="project" value="UniProtKB-UniRule"/>
</dbReference>
<dbReference type="CDD" id="cd00433">
    <property type="entry name" value="Peptidase_M17"/>
    <property type="match status" value="1"/>
</dbReference>
<dbReference type="FunFam" id="3.40.630.10:FF:000037">
    <property type="entry name" value="Peptidase B"/>
    <property type="match status" value="1"/>
</dbReference>
<dbReference type="Gene3D" id="3.40.630.10">
    <property type="entry name" value="Zn peptidases"/>
    <property type="match status" value="1"/>
</dbReference>
<dbReference type="HAMAP" id="MF_00504">
    <property type="entry name" value="Aminopeptidase_M17"/>
    <property type="match status" value="1"/>
</dbReference>
<dbReference type="InterPro" id="IPR011356">
    <property type="entry name" value="Leucine_aapep/pepB"/>
</dbReference>
<dbReference type="InterPro" id="IPR047620">
    <property type="entry name" value="M17_PepB-like_N"/>
</dbReference>
<dbReference type="InterPro" id="IPR008330">
    <property type="entry name" value="Pept_M17_PepB"/>
</dbReference>
<dbReference type="InterPro" id="IPR000819">
    <property type="entry name" value="Peptidase_M17_C"/>
</dbReference>
<dbReference type="NCBIfam" id="NF003450">
    <property type="entry name" value="PRK05015.1"/>
    <property type="match status" value="1"/>
</dbReference>
<dbReference type="PANTHER" id="PTHR11963">
    <property type="entry name" value="LEUCINE AMINOPEPTIDASE-RELATED"/>
    <property type="match status" value="1"/>
</dbReference>
<dbReference type="PANTHER" id="PTHR11963:SF20">
    <property type="entry name" value="PEPTIDASE B"/>
    <property type="match status" value="1"/>
</dbReference>
<dbReference type="Pfam" id="PF12404">
    <property type="entry name" value="DUF3663"/>
    <property type="match status" value="1"/>
</dbReference>
<dbReference type="Pfam" id="PF00883">
    <property type="entry name" value="Peptidase_M17"/>
    <property type="match status" value="1"/>
</dbReference>
<dbReference type="PIRSF" id="PIRSF036388">
    <property type="entry name" value="Ctsl_amnpptdse_B"/>
    <property type="match status" value="1"/>
</dbReference>
<dbReference type="PRINTS" id="PR00481">
    <property type="entry name" value="LAMNOPPTDASE"/>
</dbReference>
<dbReference type="SUPFAM" id="SSF53187">
    <property type="entry name" value="Zn-dependent exopeptidases"/>
    <property type="match status" value="1"/>
</dbReference>
<dbReference type="PROSITE" id="PS00631">
    <property type="entry name" value="CYTOSOL_AP"/>
    <property type="match status" value="1"/>
</dbReference>
<feature type="chain" id="PRO_1000127006" description="Peptidase B">
    <location>
        <begin position="1"/>
        <end position="427"/>
    </location>
</feature>
<feature type="active site" evidence="1">
    <location>
        <position position="207"/>
    </location>
</feature>
<feature type="active site" evidence="1">
    <location>
        <position position="281"/>
    </location>
</feature>
<feature type="binding site" evidence="1">
    <location>
        <position position="195"/>
    </location>
    <ligand>
        <name>Mn(2+)</name>
        <dbReference type="ChEBI" id="CHEBI:29035"/>
        <label>2</label>
    </ligand>
</feature>
<feature type="binding site" evidence="1">
    <location>
        <position position="200"/>
    </location>
    <ligand>
        <name>Mn(2+)</name>
        <dbReference type="ChEBI" id="CHEBI:29035"/>
        <label>1</label>
    </ligand>
</feature>
<feature type="binding site" evidence="1">
    <location>
        <position position="200"/>
    </location>
    <ligand>
        <name>Mn(2+)</name>
        <dbReference type="ChEBI" id="CHEBI:29035"/>
        <label>2</label>
    </ligand>
</feature>
<feature type="binding site" evidence="1">
    <location>
        <position position="218"/>
    </location>
    <ligand>
        <name>Mn(2+)</name>
        <dbReference type="ChEBI" id="CHEBI:29035"/>
        <label>2</label>
    </ligand>
</feature>
<feature type="binding site" evidence="1">
    <location>
        <position position="277"/>
    </location>
    <ligand>
        <name>Mn(2+)</name>
        <dbReference type="ChEBI" id="CHEBI:29035"/>
        <label>1</label>
    </ligand>
</feature>
<feature type="binding site" evidence="1">
    <location>
        <position position="279"/>
    </location>
    <ligand>
        <name>Mn(2+)</name>
        <dbReference type="ChEBI" id="CHEBI:29035"/>
        <label>1</label>
    </ligand>
</feature>
<feature type="binding site" evidence="1">
    <location>
        <position position="279"/>
    </location>
    <ligand>
        <name>Mn(2+)</name>
        <dbReference type="ChEBI" id="CHEBI:29035"/>
        <label>2</label>
    </ligand>
</feature>
<comment type="function">
    <text evidence="1">Probably plays an important role in intracellular peptide degradation.</text>
</comment>
<comment type="catalytic activity">
    <reaction evidence="1">
        <text>Release of an N-terminal amino acid, Xaa, from a peptide or arylamide. Xaa is preferably Glu or Asp but may be other amino acids, including Leu, Met, His, Cys and Gln.</text>
        <dbReference type="EC" id="3.4.11.23"/>
    </reaction>
</comment>
<comment type="cofactor">
    <cofactor evidence="1">
        <name>Mn(2+)</name>
        <dbReference type="ChEBI" id="CHEBI:29035"/>
    </cofactor>
    <text evidence="1">Binds 2 manganese ions per subunit.</text>
</comment>
<comment type="subunit">
    <text evidence="1">Homohexamer.</text>
</comment>
<comment type="subcellular location">
    <subcellularLocation>
        <location evidence="1">Cytoplasm</location>
    </subcellularLocation>
</comment>
<comment type="similarity">
    <text evidence="1">Belongs to the peptidase M17 family.</text>
</comment>